<gene>
    <name type="ordered locus">TP_0031</name>
</gene>
<feature type="chain" id="PRO_0000202179" description="Uncharacterized protein TP_0031">
    <location>
        <begin position="1"/>
        <end position="92"/>
    </location>
</feature>
<feature type="transmembrane region" description="Helical" evidence="1">
    <location>
        <begin position="65"/>
        <end position="86"/>
    </location>
</feature>
<sequence>MDLGQRVVRVIPLAPLPVRVYNAGGLRVDFFPRFFGRSPQGVGVGFARLKLSASVGSNGFRLTRAVWIFWLCFLVSGLSRAFLVYFLSVIRI</sequence>
<comment type="subcellular location">
    <subcellularLocation>
        <location evidence="2">Membrane</location>
        <topology evidence="2">Single-pass membrane protein</topology>
    </subcellularLocation>
</comment>
<reference key="1">
    <citation type="journal article" date="1998" name="Science">
        <title>Complete genome sequence of Treponema pallidum, the syphilis spirochete.</title>
        <authorList>
            <person name="Fraser C.M."/>
            <person name="Norris S.J."/>
            <person name="Weinstock G.M."/>
            <person name="White O."/>
            <person name="Sutton G.G."/>
            <person name="Dodson R.J."/>
            <person name="Gwinn M.L."/>
            <person name="Hickey E.K."/>
            <person name="Clayton R.A."/>
            <person name="Ketchum K.A."/>
            <person name="Sodergren E."/>
            <person name="Hardham J.M."/>
            <person name="McLeod M.P."/>
            <person name="Salzberg S.L."/>
            <person name="Peterson J.D."/>
            <person name="Khalak H.G."/>
            <person name="Richardson D.L."/>
            <person name="Howell J.K."/>
            <person name="Chidambaram M."/>
            <person name="Utterback T.R."/>
            <person name="McDonald L.A."/>
            <person name="Artiach P."/>
            <person name="Bowman C."/>
            <person name="Cotton M.D."/>
            <person name="Fujii C."/>
            <person name="Garland S.A."/>
            <person name="Hatch B."/>
            <person name="Horst K."/>
            <person name="Roberts K.M."/>
            <person name="Sandusky M."/>
            <person name="Weidman J.F."/>
            <person name="Smith H.O."/>
            <person name="Venter J.C."/>
        </authorList>
    </citation>
    <scope>NUCLEOTIDE SEQUENCE [LARGE SCALE GENOMIC DNA]</scope>
    <source>
        <strain>Nichols</strain>
    </source>
</reference>
<name>Y031_TREPA</name>
<protein>
    <recommendedName>
        <fullName>Uncharacterized protein TP_0031</fullName>
    </recommendedName>
</protein>
<accession>O83074</accession>
<dbReference type="EMBL" id="AE000520">
    <property type="protein sequence ID" value="AAC65032.1"/>
    <property type="molecule type" value="Genomic_DNA"/>
</dbReference>
<dbReference type="PIR" id="A71375">
    <property type="entry name" value="A71375"/>
</dbReference>
<dbReference type="RefSeq" id="WP_010881480.1">
    <property type="nucleotide sequence ID" value="NC_021490.2"/>
</dbReference>
<dbReference type="IntAct" id="O83074">
    <property type="interactions" value="4"/>
</dbReference>
<dbReference type="EnsemblBacteria" id="AAC65032">
    <property type="protein sequence ID" value="AAC65032"/>
    <property type="gene ID" value="TP_0031"/>
</dbReference>
<dbReference type="KEGG" id="tpa:TP_0031"/>
<dbReference type="KEGG" id="tpw:TPANIC_0031"/>
<dbReference type="HOGENOM" id="CLU_2412291_0_0_12"/>
<dbReference type="Proteomes" id="UP000000811">
    <property type="component" value="Chromosome"/>
</dbReference>
<dbReference type="GO" id="GO:0016020">
    <property type="term" value="C:membrane"/>
    <property type="evidence" value="ECO:0007669"/>
    <property type="project" value="UniProtKB-SubCell"/>
</dbReference>
<proteinExistence type="predicted"/>
<evidence type="ECO:0000255" key="1"/>
<evidence type="ECO:0000305" key="2"/>
<keyword id="KW-0472">Membrane</keyword>
<keyword id="KW-1185">Reference proteome</keyword>
<keyword id="KW-0812">Transmembrane</keyword>
<keyword id="KW-1133">Transmembrane helix</keyword>
<organism>
    <name type="scientific">Treponema pallidum (strain Nichols)</name>
    <dbReference type="NCBI Taxonomy" id="243276"/>
    <lineage>
        <taxon>Bacteria</taxon>
        <taxon>Pseudomonadati</taxon>
        <taxon>Spirochaetota</taxon>
        <taxon>Spirochaetia</taxon>
        <taxon>Spirochaetales</taxon>
        <taxon>Treponemataceae</taxon>
        <taxon>Treponema</taxon>
    </lineage>
</organism>